<keyword id="KW-0903">Direct protein sequencing</keyword>
<keyword id="KW-0520">NAD</keyword>
<keyword id="KW-0560">Oxidoreductase</keyword>
<keyword id="KW-1185">Reference proteome</keyword>
<evidence type="ECO:0000269" key="1">
    <source>
    </source>
</evidence>
<evidence type="ECO:0000269" key="2">
    <source>
    </source>
</evidence>
<evidence type="ECO:0000305" key="3"/>
<proteinExistence type="evidence at protein level"/>
<name>PRET_ECOLI</name>
<protein>
    <recommendedName>
        <fullName>NAD-dependent dihydropyrimidine dehydrogenase subunit PreT</fullName>
        <shortName>DPD</shortName>
        <ecNumber>1.3.1.1</ecNumber>
    </recommendedName>
    <alternativeName>
        <fullName>Dihydrothymine dehydrogenase</fullName>
    </alternativeName>
    <alternativeName>
        <fullName>Dihydrouracil dehydrogenase</fullName>
    </alternativeName>
</protein>
<gene>
    <name type="primary">preT</name>
    <name type="synonym">yeiT</name>
    <name type="ordered locus">b2146</name>
    <name type="ordered locus">JW2133</name>
</gene>
<accession>P76440</accession>
<accession>Q2MAT3</accession>
<dbReference type="EC" id="1.3.1.1"/>
<dbReference type="EMBL" id="U00096">
    <property type="protein sequence ID" value="AAC75207.1"/>
    <property type="molecule type" value="Genomic_DNA"/>
</dbReference>
<dbReference type="EMBL" id="AP009048">
    <property type="protein sequence ID" value="BAE76623.1"/>
    <property type="molecule type" value="Genomic_DNA"/>
</dbReference>
<dbReference type="PIR" id="A64983">
    <property type="entry name" value="A64983"/>
</dbReference>
<dbReference type="RefSeq" id="NP_416651.1">
    <property type="nucleotide sequence ID" value="NC_000913.3"/>
</dbReference>
<dbReference type="RefSeq" id="WP_001136389.1">
    <property type="nucleotide sequence ID" value="NZ_LN832404.1"/>
</dbReference>
<dbReference type="SMR" id="P76440"/>
<dbReference type="BioGRID" id="4259169">
    <property type="interactions" value="9"/>
</dbReference>
<dbReference type="ComplexPortal" id="CPX-5561">
    <property type="entry name" value="NAD-dependent dihydropyrimidine dehydrogenase complex"/>
</dbReference>
<dbReference type="DIP" id="DIP-28055N"/>
<dbReference type="FunCoup" id="P76440">
    <property type="interactions" value="177"/>
</dbReference>
<dbReference type="IntAct" id="P76440">
    <property type="interactions" value="5"/>
</dbReference>
<dbReference type="STRING" id="511145.b2146"/>
<dbReference type="jPOST" id="P76440"/>
<dbReference type="PaxDb" id="511145-b2146"/>
<dbReference type="EnsemblBacteria" id="AAC75207">
    <property type="protein sequence ID" value="AAC75207"/>
    <property type="gene ID" value="b2146"/>
</dbReference>
<dbReference type="GeneID" id="949049"/>
<dbReference type="KEGG" id="ecj:JW2133"/>
<dbReference type="KEGG" id="eco:b2146"/>
<dbReference type="KEGG" id="ecoc:C3026_12025"/>
<dbReference type="PATRIC" id="fig|1411691.4.peg.96"/>
<dbReference type="EchoBASE" id="EB3827"/>
<dbReference type="eggNOG" id="COG0493">
    <property type="taxonomic scope" value="Bacteria"/>
</dbReference>
<dbReference type="HOGENOM" id="CLU_000422_3_3_6"/>
<dbReference type="InParanoid" id="P76440"/>
<dbReference type="OMA" id="QACVRNN"/>
<dbReference type="OrthoDB" id="9803192at2"/>
<dbReference type="PhylomeDB" id="P76440"/>
<dbReference type="BioCyc" id="EcoCyc:G7145-MONOMER"/>
<dbReference type="BioCyc" id="MetaCyc:G7145-MONOMER"/>
<dbReference type="SABIO-RK" id="P76440"/>
<dbReference type="PRO" id="PR:P76440"/>
<dbReference type="Proteomes" id="UP000000625">
    <property type="component" value="Chromosome"/>
</dbReference>
<dbReference type="GO" id="GO:0140690">
    <property type="term" value="C:dihydropyrimidine dehydrogenase (NAD+) complex"/>
    <property type="evidence" value="ECO:0000314"/>
    <property type="project" value="EcoCyc"/>
</dbReference>
<dbReference type="GO" id="GO:1990204">
    <property type="term" value="C:oxidoreductase complex"/>
    <property type="evidence" value="ECO:0000314"/>
    <property type="project" value="ComplexPortal"/>
</dbReference>
<dbReference type="GO" id="GO:0004159">
    <property type="term" value="F:dihydropyrimidine dehydrogenase (NAD+) activity"/>
    <property type="evidence" value="ECO:0007669"/>
    <property type="project" value="UniProtKB-EC"/>
</dbReference>
<dbReference type="GO" id="GO:0051536">
    <property type="term" value="F:iron-sulfur cluster binding"/>
    <property type="evidence" value="ECO:0000314"/>
    <property type="project" value="EcoCyc"/>
</dbReference>
<dbReference type="GO" id="GO:0003954">
    <property type="term" value="F:NADH dehydrogenase activity"/>
    <property type="evidence" value="ECO:0000314"/>
    <property type="project" value="UniProtKB"/>
</dbReference>
<dbReference type="GO" id="GO:0016491">
    <property type="term" value="F:oxidoreductase activity"/>
    <property type="evidence" value="ECO:0000318"/>
    <property type="project" value="GO_Central"/>
</dbReference>
<dbReference type="GO" id="GO:0006208">
    <property type="term" value="P:pyrimidine nucleobase catabolic process"/>
    <property type="evidence" value="ECO:0000314"/>
    <property type="project" value="UniProtKB"/>
</dbReference>
<dbReference type="GO" id="GO:0006210">
    <property type="term" value="P:thymine catabolic process"/>
    <property type="evidence" value="ECO:0000314"/>
    <property type="project" value="ComplexPortal"/>
</dbReference>
<dbReference type="GO" id="GO:0006212">
    <property type="term" value="P:uracil catabolic process"/>
    <property type="evidence" value="ECO:0000314"/>
    <property type="project" value="ComplexPortal"/>
</dbReference>
<dbReference type="FunFam" id="1.10.1060.10:FF:000013">
    <property type="entry name" value="NAD-dependent dihydropyrimidine dehydrogenase subunit PreT"/>
    <property type="match status" value="1"/>
</dbReference>
<dbReference type="FunFam" id="3.50.50.60:FF:000148">
    <property type="entry name" value="NAD-dependent dihydropyrimidine dehydrogenase subunit PreT"/>
    <property type="match status" value="1"/>
</dbReference>
<dbReference type="FunFam" id="3.50.50.60:FF:000157">
    <property type="entry name" value="NAD-dependent dihydropyrimidine dehydrogenase subunit PreT"/>
    <property type="match status" value="1"/>
</dbReference>
<dbReference type="Gene3D" id="1.10.1060.10">
    <property type="entry name" value="Alpha-helical ferredoxin"/>
    <property type="match status" value="1"/>
</dbReference>
<dbReference type="Gene3D" id="3.50.50.60">
    <property type="entry name" value="FAD/NAD(P)-binding domain"/>
    <property type="match status" value="2"/>
</dbReference>
<dbReference type="InterPro" id="IPR028261">
    <property type="entry name" value="DPD_II"/>
</dbReference>
<dbReference type="InterPro" id="IPR036188">
    <property type="entry name" value="FAD/NAD-bd_sf"/>
</dbReference>
<dbReference type="InterPro" id="IPR023753">
    <property type="entry name" value="FAD/NAD-binding_dom"/>
</dbReference>
<dbReference type="InterPro" id="IPR009051">
    <property type="entry name" value="Helical_ferredxn"/>
</dbReference>
<dbReference type="PANTHER" id="PTHR43073">
    <property type="entry name" value="DIHYDROPYRIMIDINE DEHYDROGENASE [NADP(+)]"/>
    <property type="match status" value="1"/>
</dbReference>
<dbReference type="PANTHER" id="PTHR43073:SF2">
    <property type="entry name" value="DIHYDROPYRIMIDINE DEHYDROGENASE [NADP(+)]"/>
    <property type="match status" value="1"/>
</dbReference>
<dbReference type="Pfam" id="PF14691">
    <property type="entry name" value="Fer4_20"/>
    <property type="match status" value="1"/>
</dbReference>
<dbReference type="Pfam" id="PF07992">
    <property type="entry name" value="Pyr_redox_2"/>
    <property type="match status" value="1"/>
</dbReference>
<dbReference type="PRINTS" id="PR00419">
    <property type="entry name" value="ADXRDTASE"/>
</dbReference>
<dbReference type="SUPFAM" id="SSF46548">
    <property type="entry name" value="alpha-helical ferredoxin"/>
    <property type="match status" value="1"/>
</dbReference>
<dbReference type="SUPFAM" id="SSF51971">
    <property type="entry name" value="Nucleotide-binding domain"/>
    <property type="match status" value="1"/>
</dbReference>
<feature type="chain" id="PRO_0000169156" description="NAD-dependent dihydropyrimidine dehydrogenase subunit PreT">
    <location>
        <begin position="1"/>
        <end position="412"/>
    </location>
</feature>
<feature type="binding site" evidence="3">
    <location>
        <position position="286"/>
    </location>
    <ligand>
        <name>NAD(+)</name>
        <dbReference type="ChEBI" id="CHEBI:57540"/>
    </ligand>
</feature>
<comment type="function">
    <text evidence="1 2">Involved in pyrimidine base degradation. Catalyzes physiologically the reduction of uracil to 5,6-dihydrouracil (DHU) by using NADH as a specific cosubstrate. It also catalyzes the reverse reaction and the reduction of thymine to 5,6-dihydrothymine (DHT).</text>
</comment>
<comment type="catalytic activity">
    <reaction>
        <text>5,6-dihydrouracil + NAD(+) = uracil + NADH + H(+)</text>
        <dbReference type="Rhea" id="RHEA:20189"/>
        <dbReference type="ChEBI" id="CHEBI:15378"/>
        <dbReference type="ChEBI" id="CHEBI:15901"/>
        <dbReference type="ChEBI" id="CHEBI:17568"/>
        <dbReference type="ChEBI" id="CHEBI:57540"/>
        <dbReference type="ChEBI" id="CHEBI:57945"/>
        <dbReference type="EC" id="1.3.1.1"/>
    </reaction>
</comment>
<comment type="catalytic activity">
    <reaction>
        <text>5,6-dihydrothymine + NAD(+) = thymine + NADH + H(+)</text>
        <dbReference type="Rhea" id="RHEA:28791"/>
        <dbReference type="ChEBI" id="CHEBI:15378"/>
        <dbReference type="ChEBI" id="CHEBI:17821"/>
        <dbReference type="ChEBI" id="CHEBI:27468"/>
        <dbReference type="ChEBI" id="CHEBI:57540"/>
        <dbReference type="ChEBI" id="CHEBI:57945"/>
        <dbReference type="EC" id="1.3.1.1"/>
    </reaction>
</comment>
<comment type="biophysicochemical properties">
    <kinetics>
        <KM evidence="2">38 uM for uracil (at pH 6 and 30 degrees Celsius)</KM>
        <KM evidence="2">87 uM for thymidine (at pH 6 and 30 degrees Celsius)</KM>
        <KM evidence="2">130 uM for DHT (at pH 11 and 30 degrees Celsius)</KM>
        <KM evidence="2">160 uM for DHU (at pH 11 and 30 degrees Celsius)</KM>
        <Vmax evidence="2">0.18 umol/min/mg enzyme toward DHT (at pH 11 and 30 degrees Celsius)</Vmax>
        <Vmax evidence="2">0.26 umol/min/mg enzyme toward thymidine (at pH 6 and 30 degrees Celsius)</Vmax>
        <Vmax evidence="2">0.43 umol/min/mg enzyme toward uracil (at pH 6 and 30 degrees Celsius)</Vmax>
        <Vmax evidence="2">0.44 umol/min/mg enzyme toward DHU (at pH 11 and 30 degrees Celsius)</Vmax>
    </kinetics>
</comment>
<comment type="subunit">
    <text evidence="2">Heterotetramer of 2 PreA and 2 PreT subunits.</text>
</comment>
<comment type="induction">
    <text evidence="1">Transcriptionally regulated by IscS.</text>
</comment>
<comment type="similarity">
    <text evidence="3">Belongs to the NADH dehydrogenase family.</text>
</comment>
<organism>
    <name type="scientific">Escherichia coli (strain K12)</name>
    <dbReference type="NCBI Taxonomy" id="83333"/>
    <lineage>
        <taxon>Bacteria</taxon>
        <taxon>Pseudomonadati</taxon>
        <taxon>Pseudomonadota</taxon>
        <taxon>Gammaproteobacteria</taxon>
        <taxon>Enterobacterales</taxon>
        <taxon>Enterobacteriaceae</taxon>
        <taxon>Escherichia</taxon>
    </lineage>
</organism>
<reference key="1">
    <citation type="journal article" date="1997" name="Science">
        <title>The complete genome sequence of Escherichia coli K-12.</title>
        <authorList>
            <person name="Blattner F.R."/>
            <person name="Plunkett G. III"/>
            <person name="Bloch C.A."/>
            <person name="Perna N.T."/>
            <person name="Burland V."/>
            <person name="Riley M."/>
            <person name="Collado-Vides J."/>
            <person name="Glasner J.D."/>
            <person name="Rode C.K."/>
            <person name="Mayhew G.F."/>
            <person name="Gregor J."/>
            <person name="Davis N.W."/>
            <person name="Kirkpatrick H.A."/>
            <person name="Goeden M.A."/>
            <person name="Rose D.J."/>
            <person name="Mau B."/>
            <person name="Shao Y."/>
        </authorList>
    </citation>
    <scope>NUCLEOTIDE SEQUENCE [LARGE SCALE GENOMIC DNA]</scope>
    <source>
        <strain>K12 / MG1655 / ATCC 47076</strain>
    </source>
</reference>
<reference key="2">
    <citation type="journal article" date="2006" name="Mol. Syst. Biol.">
        <title>Highly accurate genome sequences of Escherichia coli K-12 strains MG1655 and W3110.</title>
        <authorList>
            <person name="Hayashi K."/>
            <person name="Morooka N."/>
            <person name="Yamamoto Y."/>
            <person name="Fujita K."/>
            <person name="Isono K."/>
            <person name="Choi S."/>
            <person name="Ohtsubo E."/>
            <person name="Baba T."/>
            <person name="Wanner B.L."/>
            <person name="Mori H."/>
            <person name="Horiuchi T."/>
        </authorList>
    </citation>
    <scope>NUCLEOTIDE SEQUENCE [LARGE SCALE GENOMIC DNA]</scope>
    <source>
        <strain>K12 / W3110 / ATCC 27325 / DSM 5911</strain>
    </source>
</reference>
<reference key="3">
    <citation type="journal article" date="2008" name="Biochem. Biophys. Res. Commun.">
        <title>The iscS gene deficiency affects the expression of pyrimidine metabolism genes.</title>
        <authorList>
            <person name="Mihara H."/>
            <person name="Hidese R."/>
            <person name="Yamane M."/>
            <person name="Kurihara T."/>
            <person name="Esaki N."/>
        </authorList>
    </citation>
    <scope>PROTEIN SEQUENCE OF 1-15</scope>
    <scope>FUNCTION IN PYRIMIDINE METABOLISM</scope>
    <scope>INDUCTION</scope>
    <scope>NAD</scope>
</reference>
<reference key="4">
    <citation type="journal article" date="2011" name="J. Bacteriol.">
        <title>Escherichia coli dihydropyrimidine dehydrogenase is a novel NAD-dependent heterotetramer essential for the production of 5,6-dihydrouracil.</title>
        <authorList>
            <person name="Hidese R."/>
            <person name="Mihara H."/>
            <person name="Kurihara T."/>
            <person name="Esaki N."/>
        </authorList>
    </citation>
    <scope>FUNCTION AS A DIHYDROPYRIMIDINE DEHYDROGENASE</scope>
    <scope>BIOPHYSICOCHEMICAL PROPERTIES</scope>
    <scope>NAD BINDING</scope>
    <scope>SUBUNIT</scope>
    <source>
        <strain>K12 / W3110 / ATCC 27325 / DSM 5911</strain>
    </source>
</reference>
<sequence length="412" mass="44329">MPQQNYLDELTPAFTSLLAIKEASRCLLCHDAPCSQACPAQTDPGKFIRSIYFRNFKGAAETIRENNALGAVCARVCPTEKLCQSGCTRAGVDAPIDIGRLQRFVTDFEQQTGMEIYQPGTKTLGKVAIIGAGPAGLQASVTLTNQGYDVTIYEKEAHPGGWLRNGIPQFRLPQSVLDAEIARIEKMGVTIKCNNEVGNTLTLEQLKAENRAVLVTVGLSSGSGLPLFEHSDVEIAVDFLQRARQAQGDISIPQSALIIGGGDVAMDVASTLKVLGCQAVTCVAREELDEFPASEKEFTSARELGVSIIDGFTPVAVEGNKVTFKHVRLSGELTMAADKIILAVGQHARLDAFAELEPQRNTIKTQNYQTRDPQVFAAGDIVEGDKTVVYAVKTGKEAAEAIHHYLEGACSC</sequence>